<evidence type="ECO:0000255" key="1">
    <source>
        <dbReference type="HAMAP-Rule" id="MF_00362"/>
    </source>
</evidence>
<evidence type="ECO:0000305" key="2"/>
<comment type="function">
    <text evidence="1">Forms part of the ribosomal stalk, playing a central role in the interaction of the ribosome with GTP-bound translation factors.</text>
</comment>
<comment type="subunit">
    <text evidence="1">Part of the ribosomal stalk of the 50S ribosomal subunit. The N-terminus interacts with L11 and the large rRNA to form the base of the stalk. The C-terminus forms an elongated spine to which L12 dimers bind in a sequential fashion forming a multimeric L10(L12)X complex.</text>
</comment>
<comment type="similarity">
    <text evidence="1">Belongs to the universal ribosomal protein uL10 family.</text>
</comment>
<organism>
    <name type="scientific">Dechloromonas aromatica (strain RCB)</name>
    <dbReference type="NCBI Taxonomy" id="159087"/>
    <lineage>
        <taxon>Bacteria</taxon>
        <taxon>Pseudomonadati</taxon>
        <taxon>Pseudomonadota</taxon>
        <taxon>Betaproteobacteria</taxon>
        <taxon>Rhodocyclales</taxon>
        <taxon>Azonexaceae</taxon>
        <taxon>Dechloromonas</taxon>
    </lineage>
</organism>
<proteinExistence type="inferred from homology"/>
<feature type="chain" id="PRO_0000234846" description="Large ribosomal subunit protein uL10">
    <location>
        <begin position="1"/>
        <end position="165"/>
    </location>
</feature>
<sequence length="165" mass="17364">MGLNLNDKKAVVAEVSAQVANAQTIVIAEYRGIEVTDLTVLRKKARESGVYLRVLKNTLVRRAVADTAFAALADHMVGPLIYSVSADPVAAAKVLSDFAKSNDKLVLKAGSYAGKVLDKAGVQALASVPSREELLSKLLYVMQAPVAGFVRGLAALAAQREEAAA</sequence>
<name>RL10_DECAR</name>
<gene>
    <name evidence="1" type="primary">rplJ</name>
    <name type="ordered locus">Daro_0310</name>
</gene>
<reference key="1">
    <citation type="journal article" date="2009" name="BMC Genomics">
        <title>Metabolic analysis of the soil microbe Dechloromonas aromatica str. RCB: indications of a surprisingly complex life-style and cryptic anaerobic pathways for aromatic degradation.</title>
        <authorList>
            <person name="Salinero K.K."/>
            <person name="Keller K."/>
            <person name="Feil W.S."/>
            <person name="Feil H."/>
            <person name="Trong S."/>
            <person name="Di Bartolo G."/>
            <person name="Lapidus A."/>
        </authorList>
    </citation>
    <scope>NUCLEOTIDE SEQUENCE [LARGE SCALE GENOMIC DNA]</scope>
    <source>
        <strain>RCB</strain>
    </source>
</reference>
<keyword id="KW-0687">Ribonucleoprotein</keyword>
<keyword id="KW-0689">Ribosomal protein</keyword>
<keyword id="KW-0694">RNA-binding</keyword>
<keyword id="KW-0699">rRNA-binding</keyword>
<accession>Q47JB2</accession>
<protein>
    <recommendedName>
        <fullName evidence="1">Large ribosomal subunit protein uL10</fullName>
    </recommendedName>
    <alternativeName>
        <fullName evidence="2">50S ribosomal protein L10</fullName>
    </alternativeName>
</protein>
<dbReference type="EMBL" id="CP000089">
    <property type="protein sequence ID" value="AAZ45069.1"/>
    <property type="molecule type" value="Genomic_DNA"/>
</dbReference>
<dbReference type="SMR" id="Q47JB2"/>
<dbReference type="STRING" id="159087.Daro_0310"/>
<dbReference type="KEGG" id="dar:Daro_0310"/>
<dbReference type="eggNOG" id="COG0244">
    <property type="taxonomic scope" value="Bacteria"/>
</dbReference>
<dbReference type="HOGENOM" id="CLU_092227_0_1_4"/>
<dbReference type="OrthoDB" id="9808307at2"/>
<dbReference type="GO" id="GO:1990904">
    <property type="term" value="C:ribonucleoprotein complex"/>
    <property type="evidence" value="ECO:0007669"/>
    <property type="project" value="UniProtKB-KW"/>
</dbReference>
<dbReference type="GO" id="GO:0005840">
    <property type="term" value="C:ribosome"/>
    <property type="evidence" value="ECO:0007669"/>
    <property type="project" value="UniProtKB-KW"/>
</dbReference>
<dbReference type="GO" id="GO:0070180">
    <property type="term" value="F:large ribosomal subunit rRNA binding"/>
    <property type="evidence" value="ECO:0007669"/>
    <property type="project" value="UniProtKB-UniRule"/>
</dbReference>
<dbReference type="GO" id="GO:0006412">
    <property type="term" value="P:translation"/>
    <property type="evidence" value="ECO:0007669"/>
    <property type="project" value="UniProtKB-UniRule"/>
</dbReference>
<dbReference type="CDD" id="cd05797">
    <property type="entry name" value="Ribosomal_L10"/>
    <property type="match status" value="1"/>
</dbReference>
<dbReference type="Gene3D" id="3.30.70.1730">
    <property type="match status" value="1"/>
</dbReference>
<dbReference type="Gene3D" id="6.10.250.290">
    <property type="match status" value="1"/>
</dbReference>
<dbReference type="HAMAP" id="MF_00362">
    <property type="entry name" value="Ribosomal_uL10"/>
    <property type="match status" value="1"/>
</dbReference>
<dbReference type="InterPro" id="IPR001790">
    <property type="entry name" value="Ribosomal_uL10"/>
</dbReference>
<dbReference type="InterPro" id="IPR043141">
    <property type="entry name" value="Ribosomal_uL10-like_sf"/>
</dbReference>
<dbReference type="InterPro" id="IPR022973">
    <property type="entry name" value="Ribosomal_uL10_bac"/>
</dbReference>
<dbReference type="InterPro" id="IPR047865">
    <property type="entry name" value="Ribosomal_uL10_bac_type"/>
</dbReference>
<dbReference type="NCBIfam" id="NF000955">
    <property type="entry name" value="PRK00099.1-1"/>
    <property type="match status" value="1"/>
</dbReference>
<dbReference type="PANTHER" id="PTHR11560">
    <property type="entry name" value="39S RIBOSOMAL PROTEIN L10, MITOCHONDRIAL"/>
    <property type="match status" value="1"/>
</dbReference>
<dbReference type="Pfam" id="PF00466">
    <property type="entry name" value="Ribosomal_L10"/>
    <property type="match status" value="1"/>
</dbReference>
<dbReference type="SUPFAM" id="SSF160369">
    <property type="entry name" value="Ribosomal protein L10-like"/>
    <property type="match status" value="1"/>
</dbReference>